<organism>
    <name type="scientific">Brucella abortus biovar 1 (strain 9-941)</name>
    <dbReference type="NCBI Taxonomy" id="262698"/>
    <lineage>
        <taxon>Bacteria</taxon>
        <taxon>Pseudomonadati</taxon>
        <taxon>Pseudomonadota</taxon>
        <taxon>Alphaproteobacteria</taxon>
        <taxon>Hyphomicrobiales</taxon>
        <taxon>Brucellaceae</taxon>
        <taxon>Brucella/Ochrobactrum group</taxon>
        <taxon>Brucella</taxon>
    </lineage>
</organism>
<name>SSRP_BRUAB</name>
<gene>
    <name evidence="1" type="primary">smpB</name>
    <name type="ordered locus">BruAb1_0664</name>
</gene>
<sequence length="158" mass="18570">MNKPKNSPARKMIAENRKARFNFEILDTLEAGLVLTGTEVKSLRANQANIAESYASFEDGEFWLINSYIPEYTQGNRFNHEPRRLRKLLVSRREMSRLFNSVSREGMTVVPLKLYFNDRGRAKLELALARGKKTHDKRETEKKRDWNREKARLLRDRG</sequence>
<comment type="function">
    <text evidence="1">Required for rescue of stalled ribosomes mediated by trans-translation. Binds to transfer-messenger RNA (tmRNA), required for stable association of tmRNA with ribosomes. tmRNA and SmpB together mimic tRNA shape, replacing the anticodon stem-loop with SmpB. tmRNA is encoded by the ssrA gene; the 2 termini fold to resemble tRNA(Ala) and it encodes a 'tag peptide', a short internal open reading frame. During trans-translation Ala-aminoacylated tmRNA acts like a tRNA, entering the A-site of stalled ribosomes, displacing the stalled mRNA. The ribosome then switches to translate the ORF on the tmRNA; the nascent peptide is terminated with the 'tag peptide' encoded by the tmRNA and targeted for degradation. The ribosome is freed to recommence translation, which seems to be the essential function of trans-translation.</text>
</comment>
<comment type="subcellular location">
    <subcellularLocation>
        <location evidence="1">Cytoplasm</location>
    </subcellularLocation>
    <text evidence="1">The tmRNA-SmpB complex associates with stalled 70S ribosomes.</text>
</comment>
<comment type="similarity">
    <text evidence="1">Belongs to the SmpB family.</text>
</comment>
<feature type="chain" id="PRO_1000002008" description="SsrA-binding protein">
    <location>
        <begin position="1"/>
        <end position="158"/>
    </location>
</feature>
<feature type="region of interest" description="Disordered" evidence="2">
    <location>
        <begin position="131"/>
        <end position="158"/>
    </location>
</feature>
<feature type="compositionally biased region" description="Basic and acidic residues" evidence="2">
    <location>
        <begin position="136"/>
        <end position="158"/>
    </location>
</feature>
<protein>
    <recommendedName>
        <fullName evidence="1">SsrA-binding protein</fullName>
    </recommendedName>
    <alternativeName>
        <fullName evidence="1">Small protein B</fullName>
    </alternativeName>
</protein>
<evidence type="ECO:0000255" key="1">
    <source>
        <dbReference type="HAMAP-Rule" id="MF_00023"/>
    </source>
</evidence>
<evidence type="ECO:0000256" key="2">
    <source>
        <dbReference type="SAM" id="MobiDB-lite"/>
    </source>
</evidence>
<accession>Q57E95</accession>
<reference key="1">
    <citation type="journal article" date="2005" name="J. Bacteriol.">
        <title>Completion of the genome sequence of Brucella abortus and comparison to the highly similar genomes of Brucella melitensis and Brucella suis.</title>
        <authorList>
            <person name="Halling S.M."/>
            <person name="Peterson-Burch B.D."/>
            <person name="Bricker B.J."/>
            <person name="Zuerner R.L."/>
            <person name="Qing Z."/>
            <person name="Li L.-L."/>
            <person name="Kapur V."/>
            <person name="Alt D.P."/>
            <person name="Olsen S.C."/>
        </authorList>
    </citation>
    <scope>NUCLEOTIDE SEQUENCE [LARGE SCALE GENOMIC DNA]</scope>
    <source>
        <strain>9-941</strain>
    </source>
</reference>
<keyword id="KW-0963">Cytoplasm</keyword>
<keyword id="KW-0694">RNA-binding</keyword>
<proteinExistence type="inferred from homology"/>
<dbReference type="EMBL" id="AE017223">
    <property type="protein sequence ID" value="AAX74039.1"/>
    <property type="molecule type" value="Genomic_DNA"/>
</dbReference>
<dbReference type="RefSeq" id="WP_002963791.1">
    <property type="nucleotide sequence ID" value="NC_006932.1"/>
</dbReference>
<dbReference type="SMR" id="Q57E95"/>
<dbReference type="EnsemblBacteria" id="AAX74039">
    <property type="protein sequence ID" value="AAX74039"/>
    <property type="gene ID" value="BruAb1_0664"/>
</dbReference>
<dbReference type="GeneID" id="97534023"/>
<dbReference type="KEGG" id="bmb:BruAb1_0664"/>
<dbReference type="HOGENOM" id="CLU_108953_0_1_5"/>
<dbReference type="Proteomes" id="UP000000540">
    <property type="component" value="Chromosome I"/>
</dbReference>
<dbReference type="GO" id="GO:0005829">
    <property type="term" value="C:cytosol"/>
    <property type="evidence" value="ECO:0007669"/>
    <property type="project" value="TreeGrafter"/>
</dbReference>
<dbReference type="GO" id="GO:0003723">
    <property type="term" value="F:RNA binding"/>
    <property type="evidence" value="ECO:0007669"/>
    <property type="project" value="UniProtKB-UniRule"/>
</dbReference>
<dbReference type="GO" id="GO:0070929">
    <property type="term" value="P:trans-translation"/>
    <property type="evidence" value="ECO:0007669"/>
    <property type="project" value="UniProtKB-UniRule"/>
</dbReference>
<dbReference type="CDD" id="cd09294">
    <property type="entry name" value="SmpB"/>
    <property type="match status" value="1"/>
</dbReference>
<dbReference type="Gene3D" id="2.40.280.10">
    <property type="match status" value="1"/>
</dbReference>
<dbReference type="HAMAP" id="MF_00023">
    <property type="entry name" value="SmpB"/>
    <property type="match status" value="1"/>
</dbReference>
<dbReference type="InterPro" id="IPR023620">
    <property type="entry name" value="SmpB"/>
</dbReference>
<dbReference type="InterPro" id="IPR000037">
    <property type="entry name" value="SsrA-bd_prot"/>
</dbReference>
<dbReference type="InterPro" id="IPR020081">
    <property type="entry name" value="SsrA-bd_prot_CS"/>
</dbReference>
<dbReference type="NCBIfam" id="NF003843">
    <property type="entry name" value="PRK05422.1"/>
    <property type="match status" value="1"/>
</dbReference>
<dbReference type="NCBIfam" id="TIGR00086">
    <property type="entry name" value="smpB"/>
    <property type="match status" value="1"/>
</dbReference>
<dbReference type="PANTHER" id="PTHR30308:SF2">
    <property type="entry name" value="SSRA-BINDING PROTEIN"/>
    <property type="match status" value="1"/>
</dbReference>
<dbReference type="PANTHER" id="PTHR30308">
    <property type="entry name" value="TMRNA-BINDING COMPONENT OF TRANS-TRANSLATION TAGGING COMPLEX"/>
    <property type="match status" value="1"/>
</dbReference>
<dbReference type="Pfam" id="PF01668">
    <property type="entry name" value="SmpB"/>
    <property type="match status" value="1"/>
</dbReference>
<dbReference type="SUPFAM" id="SSF74982">
    <property type="entry name" value="Small protein B (SmpB)"/>
    <property type="match status" value="1"/>
</dbReference>
<dbReference type="PROSITE" id="PS01317">
    <property type="entry name" value="SSRP"/>
    <property type="match status" value="1"/>
</dbReference>